<organism>
    <name type="scientific">Methanococcus maripaludis (strain C5 / ATCC BAA-1333)</name>
    <dbReference type="NCBI Taxonomy" id="402880"/>
    <lineage>
        <taxon>Archaea</taxon>
        <taxon>Methanobacteriati</taxon>
        <taxon>Methanobacteriota</taxon>
        <taxon>Methanomada group</taxon>
        <taxon>Methanococci</taxon>
        <taxon>Methanococcales</taxon>
        <taxon>Methanococcaceae</taxon>
        <taxon>Methanococcus</taxon>
    </lineage>
</organism>
<accession>A4FZ86</accession>
<dbReference type="EC" id="2.3.1.234" evidence="1"/>
<dbReference type="EC" id="2.7.11.1" evidence="1"/>
<dbReference type="EMBL" id="CP000609">
    <property type="protein sequence ID" value="ABO35520.1"/>
    <property type="molecule type" value="Genomic_DNA"/>
</dbReference>
<dbReference type="RefSeq" id="WP_011868973.1">
    <property type="nucleotide sequence ID" value="NC_009135.1"/>
</dbReference>
<dbReference type="SMR" id="A4FZ86"/>
<dbReference type="STRING" id="402880.MmarC5_1222"/>
<dbReference type="GeneID" id="4929014"/>
<dbReference type="KEGG" id="mmq:MmarC5_1222"/>
<dbReference type="eggNOG" id="arCOG01183">
    <property type="taxonomic scope" value="Archaea"/>
</dbReference>
<dbReference type="eggNOG" id="arCOG01185">
    <property type="taxonomic scope" value="Archaea"/>
</dbReference>
<dbReference type="HOGENOM" id="CLU_023208_2_2_2"/>
<dbReference type="OrthoDB" id="6818at2157"/>
<dbReference type="Proteomes" id="UP000000253">
    <property type="component" value="Chromosome"/>
</dbReference>
<dbReference type="GO" id="GO:0005737">
    <property type="term" value="C:cytoplasm"/>
    <property type="evidence" value="ECO:0007669"/>
    <property type="project" value="UniProtKB-SubCell"/>
</dbReference>
<dbReference type="GO" id="GO:0000408">
    <property type="term" value="C:EKC/KEOPS complex"/>
    <property type="evidence" value="ECO:0007669"/>
    <property type="project" value="InterPro"/>
</dbReference>
<dbReference type="GO" id="GO:0005524">
    <property type="term" value="F:ATP binding"/>
    <property type="evidence" value="ECO:0007669"/>
    <property type="project" value="UniProtKB-UniRule"/>
</dbReference>
<dbReference type="GO" id="GO:0005506">
    <property type="term" value="F:iron ion binding"/>
    <property type="evidence" value="ECO:0007669"/>
    <property type="project" value="UniProtKB-UniRule"/>
</dbReference>
<dbReference type="GO" id="GO:0004222">
    <property type="term" value="F:metalloendopeptidase activity"/>
    <property type="evidence" value="ECO:0007669"/>
    <property type="project" value="InterPro"/>
</dbReference>
<dbReference type="GO" id="GO:0061711">
    <property type="term" value="F:N(6)-L-threonylcarbamoyladenine synthase activity"/>
    <property type="evidence" value="ECO:0007669"/>
    <property type="project" value="UniProtKB-EC"/>
</dbReference>
<dbReference type="GO" id="GO:0106310">
    <property type="term" value="F:protein serine kinase activity"/>
    <property type="evidence" value="ECO:0007669"/>
    <property type="project" value="RHEA"/>
</dbReference>
<dbReference type="GO" id="GO:0004674">
    <property type="term" value="F:protein serine/threonine kinase activity"/>
    <property type="evidence" value="ECO:0007669"/>
    <property type="project" value="UniProtKB-KW"/>
</dbReference>
<dbReference type="GO" id="GO:0004712">
    <property type="term" value="F:protein serine/threonine/tyrosine kinase activity"/>
    <property type="evidence" value="ECO:0007669"/>
    <property type="project" value="UniProtKB-UniRule"/>
</dbReference>
<dbReference type="GO" id="GO:0008270">
    <property type="term" value="F:zinc ion binding"/>
    <property type="evidence" value="ECO:0007669"/>
    <property type="project" value="InterPro"/>
</dbReference>
<dbReference type="GO" id="GO:0002949">
    <property type="term" value="P:tRNA threonylcarbamoyladenosine modification"/>
    <property type="evidence" value="ECO:0007669"/>
    <property type="project" value="UniProtKB-UniRule"/>
</dbReference>
<dbReference type="CDD" id="cd24131">
    <property type="entry name" value="ASKHA_NBD_Kae1_arch_bac"/>
    <property type="match status" value="1"/>
</dbReference>
<dbReference type="FunFam" id="3.30.420.40:FF:000038">
    <property type="entry name" value="Probable tRNA N6-adenosine threonylcarbamoyltransferase"/>
    <property type="match status" value="1"/>
</dbReference>
<dbReference type="Gene3D" id="3.30.420.40">
    <property type="match status" value="2"/>
</dbReference>
<dbReference type="Gene3D" id="3.30.200.20">
    <property type="entry name" value="Phosphorylase Kinase, domain 1"/>
    <property type="match status" value="1"/>
</dbReference>
<dbReference type="Gene3D" id="1.10.510.10">
    <property type="entry name" value="Transferase(Phosphotransferase) domain 1"/>
    <property type="match status" value="1"/>
</dbReference>
<dbReference type="HAMAP" id="MF_01446">
    <property type="entry name" value="Kae1"/>
    <property type="match status" value="1"/>
</dbReference>
<dbReference type="HAMAP" id="MF_01447">
    <property type="entry name" value="Kae1_Bud32_arch"/>
    <property type="match status" value="1"/>
</dbReference>
<dbReference type="InterPro" id="IPR043129">
    <property type="entry name" value="ATPase_NBD"/>
</dbReference>
<dbReference type="InterPro" id="IPR022495">
    <property type="entry name" value="Bud32"/>
</dbReference>
<dbReference type="InterPro" id="IPR000905">
    <property type="entry name" value="Gcp-like_dom"/>
</dbReference>
<dbReference type="InterPro" id="IPR017861">
    <property type="entry name" value="KAE1/TsaD"/>
</dbReference>
<dbReference type="InterPro" id="IPR034680">
    <property type="entry name" value="Kae1_archaea_euk"/>
</dbReference>
<dbReference type="InterPro" id="IPR011009">
    <property type="entry name" value="Kinase-like_dom_sf"/>
</dbReference>
<dbReference type="InterPro" id="IPR009220">
    <property type="entry name" value="tRNA_threonyl_synthase/kinase"/>
</dbReference>
<dbReference type="InterPro" id="IPR008266">
    <property type="entry name" value="Tyr_kinase_AS"/>
</dbReference>
<dbReference type="NCBIfam" id="TIGR03724">
    <property type="entry name" value="arch_bud32"/>
    <property type="match status" value="1"/>
</dbReference>
<dbReference type="NCBIfam" id="TIGR03722">
    <property type="entry name" value="arch_KAE1"/>
    <property type="match status" value="1"/>
</dbReference>
<dbReference type="NCBIfam" id="TIGR00329">
    <property type="entry name" value="gcp_kae1"/>
    <property type="match status" value="1"/>
</dbReference>
<dbReference type="NCBIfam" id="NF007174">
    <property type="entry name" value="PRK09605.1"/>
    <property type="match status" value="1"/>
</dbReference>
<dbReference type="PANTHER" id="PTHR11735">
    <property type="entry name" value="TRNA N6-ADENOSINE THREONYLCARBAMOYLTRANSFERASE"/>
    <property type="match status" value="1"/>
</dbReference>
<dbReference type="PANTHER" id="PTHR11735:SF14">
    <property type="entry name" value="TRNA N6-ADENOSINE THREONYLCARBAMOYLTRANSFERASE"/>
    <property type="match status" value="1"/>
</dbReference>
<dbReference type="Pfam" id="PF00814">
    <property type="entry name" value="TsaD"/>
    <property type="match status" value="1"/>
</dbReference>
<dbReference type="PIRSF" id="PIRSF036401">
    <property type="entry name" value="Gcp_STYKS"/>
    <property type="match status" value="1"/>
</dbReference>
<dbReference type="PRINTS" id="PR00789">
    <property type="entry name" value="OSIALOPTASE"/>
</dbReference>
<dbReference type="SUPFAM" id="SSF53067">
    <property type="entry name" value="Actin-like ATPase domain"/>
    <property type="match status" value="1"/>
</dbReference>
<dbReference type="SUPFAM" id="SSF56112">
    <property type="entry name" value="Protein kinase-like (PK-like)"/>
    <property type="match status" value="1"/>
</dbReference>
<dbReference type="PROSITE" id="PS00109">
    <property type="entry name" value="PROTEIN_KINASE_TYR"/>
    <property type="match status" value="1"/>
</dbReference>
<sequence length="545" mass="61127">MDTSKDLICIGFEGTAEKTGVGIITSNGEVLFNKTIIYTPPVQGIHPREAADHHAETFVKLLKEALTVVPIEKIDLVSFSLGPGLGPSLRVTATTARALSLSINKPIIGVNHCISHVEIGKLKTDALDPLTLYVSGGNTQVLAYTGKKYRVIGETLDIAIGNCLDQFARHCNMPHPGGVYVEKYAKNGNKFIKLPYTVKGMDISLSGLLTAAMKKYDSKERIEDVCYSLQENSFSMLTEITERALAHTNKAEVMLVGGVAANNRLKEMLDIMCIEQNVDFYVPEREFCGDNGAMIAWLGILQYLNGKRMDLNDTKPISNYRSDMVEVNWISENEFNNENIKSRIIPEHLIGKGAEADISKGIYLEFESITKERVKKGYRILELDELIRLRRTVKEARFLASIKELGIYAPSIFDIDKENKKITMSYIHGKIAKEKIEEGNLNFCEDLGKIIGKMHSGGIVHNDLTTSNFIVSDNTFVIDFGLGKYSDLVEDKAIDLIVLKKSIMSIHYDKFDSVWNKIIEGYKTYEMFESVLECMKEVEKRARYL</sequence>
<comment type="function">
    <text evidence="1">Required for the formation of a threonylcarbamoyl group on adenosine at position 37 (t(6)A37) in tRNAs that read codons beginning with adenine. Is a component of the KEOPS complex that is probably involved in the transfer of the threonylcarbamoyl moiety of threonylcarbamoyl-AMP (TC-AMP) to the N6 group of A37. The Kae1 domain likely plays a direct catalytic role in this reaction. The Bud32 domain probably displays kinase activity that regulates Kae1 function.</text>
</comment>
<comment type="catalytic activity">
    <reaction evidence="1">
        <text>L-seryl-[protein] + ATP = O-phospho-L-seryl-[protein] + ADP + H(+)</text>
        <dbReference type="Rhea" id="RHEA:17989"/>
        <dbReference type="Rhea" id="RHEA-COMP:9863"/>
        <dbReference type="Rhea" id="RHEA-COMP:11604"/>
        <dbReference type="ChEBI" id="CHEBI:15378"/>
        <dbReference type="ChEBI" id="CHEBI:29999"/>
        <dbReference type="ChEBI" id="CHEBI:30616"/>
        <dbReference type="ChEBI" id="CHEBI:83421"/>
        <dbReference type="ChEBI" id="CHEBI:456216"/>
        <dbReference type="EC" id="2.7.11.1"/>
    </reaction>
</comment>
<comment type="catalytic activity">
    <reaction evidence="1">
        <text>L-threonyl-[protein] + ATP = O-phospho-L-threonyl-[protein] + ADP + H(+)</text>
        <dbReference type="Rhea" id="RHEA:46608"/>
        <dbReference type="Rhea" id="RHEA-COMP:11060"/>
        <dbReference type="Rhea" id="RHEA-COMP:11605"/>
        <dbReference type="ChEBI" id="CHEBI:15378"/>
        <dbReference type="ChEBI" id="CHEBI:30013"/>
        <dbReference type="ChEBI" id="CHEBI:30616"/>
        <dbReference type="ChEBI" id="CHEBI:61977"/>
        <dbReference type="ChEBI" id="CHEBI:456216"/>
        <dbReference type="EC" id="2.7.11.1"/>
    </reaction>
</comment>
<comment type="catalytic activity">
    <reaction evidence="1">
        <text>L-threonylcarbamoyladenylate + adenosine(37) in tRNA = N(6)-L-threonylcarbamoyladenosine(37) in tRNA + AMP + H(+)</text>
        <dbReference type="Rhea" id="RHEA:37059"/>
        <dbReference type="Rhea" id="RHEA-COMP:10162"/>
        <dbReference type="Rhea" id="RHEA-COMP:10163"/>
        <dbReference type="ChEBI" id="CHEBI:15378"/>
        <dbReference type="ChEBI" id="CHEBI:73682"/>
        <dbReference type="ChEBI" id="CHEBI:74411"/>
        <dbReference type="ChEBI" id="CHEBI:74418"/>
        <dbReference type="ChEBI" id="CHEBI:456215"/>
        <dbReference type="EC" id="2.3.1.234"/>
    </reaction>
</comment>
<comment type="cofactor">
    <cofactor evidence="1">
        <name>Fe(2+)</name>
        <dbReference type="ChEBI" id="CHEBI:29033"/>
    </cofactor>
    <text evidence="1">Binds 1 Fe(2+) ion per subunit.</text>
</comment>
<comment type="subunit">
    <text evidence="1">Component of the KEOPS complex that consists of Kae1, Bud32, Cgi121 and Pcc1; the whole complex dimerizes.</text>
</comment>
<comment type="subcellular location">
    <subcellularLocation>
        <location evidence="1">Cytoplasm</location>
    </subcellularLocation>
</comment>
<comment type="similarity">
    <text evidence="1">In the N-terminal section; belongs to the KAE1 / TsaD family.</text>
</comment>
<comment type="similarity">
    <text evidence="1">In the C-terminal section; belongs to the protein kinase superfamily. Tyr protein kinase family. BUD32 subfamily.</text>
</comment>
<feature type="chain" id="PRO_1000024464" description="Probable bifunctional tRNA threonylcarbamoyladenosine biosynthesis protein">
    <location>
        <begin position="1"/>
        <end position="545"/>
    </location>
</feature>
<feature type="domain" description="Protein kinase" evidence="1">
    <location>
        <begin position="344"/>
        <end position="545"/>
    </location>
</feature>
<feature type="region of interest" description="Kae1">
    <location>
        <begin position="1"/>
        <end position="329"/>
    </location>
</feature>
<feature type="active site" description="Proton acceptor; for kinase activity" evidence="1">
    <location>
        <position position="463"/>
    </location>
</feature>
<feature type="binding site" evidence="1">
    <location>
        <position position="112"/>
    </location>
    <ligand>
        <name>Fe cation</name>
        <dbReference type="ChEBI" id="CHEBI:24875"/>
    </ligand>
</feature>
<feature type="binding site" evidence="1">
    <location>
        <position position="116"/>
    </location>
    <ligand>
        <name>Fe cation</name>
        <dbReference type="ChEBI" id="CHEBI:24875"/>
    </ligand>
</feature>
<feature type="binding site" evidence="1">
    <location>
        <begin position="133"/>
        <end position="137"/>
    </location>
    <ligand>
        <name>L-threonylcarbamoyladenylate</name>
        <dbReference type="ChEBI" id="CHEBI:73682"/>
    </ligand>
</feature>
<feature type="binding site" evidence="1">
    <location>
        <position position="133"/>
    </location>
    <ligand>
        <name>Fe cation</name>
        <dbReference type="ChEBI" id="CHEBI:24875"/>
    </ligand>
</feature>
<feature type="binding site" evidence="1">
    <location>
        <position position="165"/>
    </location>
    <ligand>
        <name>L-threonylcarbamoyladenylate</name>
        <dbReference type="ChEBI" id="CHEBI:73682"/>
    </ligand>
</feature>
<feature type="binding site" evidence="1">
    <location>
        <position position="178"/>
    </location>
    <ligand>
        <name>L-threonylcarbamoyladenylate</name>
        <dbReference type="ChEBI" id="CHEBI:73682"/>
    </ligand>
</feature>
<feature type="binding site" evidence="1">
    <location>
        <position position="182"/>
    </location>
    <ligand>
        <name>L-threonylcarbamoyladenylate</name>
        <dbReference type="ChEBI" id="CHEBI:73682"/>
    </ligand>
</feature>
<feature type="binding site" evidence="1">
    <location>
        <position position="262"/>
    </location>
    <ligand>
        <name>L-threonylcarbamoyladenylate</name>
        <dbReference type="ChEBI" id="CHEBI:73682"/>
    </ligand>
</feature>
<feature type="binding site" evidence="1">
    <location>
        <position position="290"/>
    </location>
    <ligand>
        <name>Fe cation</name>
        <dbReference type="ChEBI" id="CHEBI:24875"/>
    </ligand>
</feature>
<feature type="binding site" evidence="1">
    <location>
        <begin position="350"/>
        <end position="358"/>
    </location>
    <ligand>
        <name>ATP</name>
        <dbReference type="ChEBI" id="CHEBI:30616"/>
    </ligand>
</feature>
<feature type="binding site" evidence="1">
    <location>
        <position position="371"/>
    </location>
    <ligand>
        <name>ATP</name>
        <dbReference type="ChEBI" id="CHEBI:30616"/>
    </ligand>
</feature>
<protein>
    <recommendedName>
        <fullName evidence="1">Probable bifunctional tRNA threonylcarbamoyladenosine biosynthesis protein</fullName>
    </recommendedName>
    <domain>
        <recommendedName>
            <fullName evidence="1">tRNA N6-adenosine threonylcarbamoyltransferase</fullName>
            <ecNumber evidence="1">2.3.1.234</ecNumber>
        </recommendedName>
        <alternativeName>
            <fullName>N6-L-threonylcarbamoyladenine synthase</fullName>
            <shortName>t(6)A synthase</shortName>
        </alternativeName>
        <alternativeName>
            <fullName evidence="1">t(6)A37 threonylcarbamoyladenosine biosynthesis protein Kae1</fullName>
        </alternativeName>
        <alternativeName>
            <fullName evidence="1">tRNA threonylcarbamoyladenosine biosynthesis protein Kae1</fullName>
        </alternativeName>
    </domain>
    <domain>
        <recommendedName>
            <fullName evidence="1">Serine/threonine-protein kinase Bud32</fullName>
            <ecNumber evidence="1">2.7.11.1</ecNumber>
        </recommendedName>
    </domain>
</protein>
<gene>
    <name type="ordered locus">MmarC5_1222</name>
</gene>
<reference key="1">
    <citation type="submission" date="2007-03" db="EMBL/GenBank/DDBJ databases">
        <title>Complete sequence of chromosome of Methanococcus maripaludis C5.</title>
        <authorList>
            <consortium name="US DOE Joint Genome Institute"/>
            <person name="Copeland A."/>
            <person name="Lucas S."/>
            <person name="Lapidus A."/>
            <person name="Barry K."/>
            <person name="Glavina del Rio T."/>
            <person name="Dalin E."/>
            <person name="Tice H."/>
            <person name="Pitluck S."/>
            <person name="Chertkov O."/>
            <person name="Brettin T."/>
            <person name="Bruce D."/>
            <person name="Han C."/>
            <person name="Detter J.C."/>
            <person name="Schmutz J."/>
            <person name="Larimer F."/>
            <person name="Land M."/>
            <person name="Hauser L."/>
            <person name="Kyrpides N."/>
            <person name="Mikhailova N."/>
            <person name="Sieprawska-Lupa M."/>
            <person name="Whitman W.B."/>
            <person name="Richardson P."/>
        </authorList>
    </citation>
    <scope>NUCLEOTIDE SEQUENCE [LARGE SCALE GENOMIC DNA]</scope>
    <source>
        <strain>C5 / ATCC BAA-1333</strain>
    </source>
</reference>
<proteinExistence type="inferred from homology"/>
<evidence type="ECO:0000255" key="1">
    <source>
        <dbReference type="HAMAP-Rule" id="MF_01447"/>
    </source>
</evidence>
<name>KAE1B_METM5</name>
<keyword id="KW-0012">Acyltransferase</keyword>
<keyword id="KW-0067">ATP-binding</keyword>
<keyword id="KW-0963">Cytoplasm</keyword>
<keyword id="KW-0408">Iron</keyword>
<keyword id="KW-0418">Kinase</keyword>
<keyword id="KW-0479">Metal-binding</keyword>
<keyword id="KW-0511">Multifunctional enzyme</keyword>
<keyword id="KW-0547">Nucleotide-binding</keyword>
<keyword id="KW-0723">Serine/threonine-protein kinase</keyword>
<keyword id="KW-0808">Transferase</keyword>
<keyword id="KW-0819">tRNA processing</keyword>